<feature type="chain" id="PRO_0000101446" description="Uncharacterized protein RC0058">
    <location>
        <begin position="1"/>
        <end position="131"/>
    </location>
</feature>
<proteinExistence type="predicted"/>
<reference key="1">
    <citation type="journal article" date="2001" name="Science">
        <title>Mechanisms of evolution in Rickettsia conorii and R. prowazekii.</title>
        <authorList>
            <person name="Ogata H."/>
            <person name="Audic S."/>
            <person name="Renesto-Audiffren P."/>
            <person name="Fournier P.-E."/>
            <person name="Barbe V."/>
            <person name="Samson D."/>
            <person name="Roux V."/>
            <person name="Cossart P."/>
            <person name="Weissenbach J."/>
            <person name="Claverie J.-M."/>
            <person name="Raoult D."/>
        </authorList>
    </citation>
    <scope>NUCLEOTIDE SEQUENCE [LARGE SCALE GENOMIC DNA]</scope>
    <source>
        <strain>ATCC VR-613 / Malish 7</strain>
    </source>
</reference>
<organism>
    <name type="scientific">Rickettsia conorii (strain ATCC VR-613 / Malish 7)</name>
    <dbReference type="NCBI Taxonomy" id="272944"/>
    <lineage>
        <taxon>Bacteria</taxon>
        <taxon>Pseudomonadati</taxon>
        <taxon>Pseudomonadota</taxon>
        <taxon>Alphaproteobacteria</taxon>
        <taxon>Rickettsiales</taxon>
        <taxon>Rickettsiaceae</taxon>
        <taxon>Rickettsieae</taxon>
        <taxon>Rickettsia</taxon>
        <taxon>spotted fever group</taxon>
    </lineage>
</organism>
<gene>
    <name type="ordered locus">RC0058</name>
</gene>
<dbReference type="EMBL" id="AE006914">
    <property type="protein sequence ID" value="AAL02596.1"/>
    <property type="molecule type" value="Genomic_DNA"/>
</dbReference>
<dbReference type="PIR" id="B97707">
    <property type="entry name" value="B97707"/>
</dbReference>
<dbReference type="RefSeq" id="WP_010976744.1">
    <property type="nucleotide sequence ID" value="NC_003103.1"/>
</dbReference>
<dbReference type="SMR" id="Q92JK9"/>
<dbReference type="GeneID" id="928607"/>
<dbReference type="KEGG" id="rco:RC0058"/>
<dbReference type="PATRIC" id="fig|272944.4.peg.69"/>
<dbReference type="HOGENOM" id="CLU_158653_0_0_5"/>
<dbReference type="Proteomes" id="UP000000816">
    <property type="component" value="Chromosome"/>
</dbReference>
<name>Y058_RICCN</name>
<accession>Q92JK9</accession>
<protein>
    <recommendedName>
        <fullName>Uncharacterized protein RC0058</fullName>
    </recommendedName>
</protein>
<sequence>MLSSLKKQFDNDKEFLLNHTKEFLTTPGVGVTLETNRANIEGKNGETPILIRDGRNNPNEKIVLGTKAFEYLNAIRGAINIAKGKNKPELVLKLNKKTVKFINRFNAFNMEKSQENISKIGKLKLTVLLNC</sequence>